<proteinExistence type="inferred from homology"/>
<gene>
    <name evidence="1" type="primary">rpsM</name>
    <name type="ordered locus">HDEF_1844</name>
</gene>
<evidence type="ECO:0000255" key="1">
    <source>
        <dbReference type="HAMAP-Rule" id="MF_01315"/>
    </source>
</evidence>
<evidence type="ECO:0000256" key="2">
    <source>
        <dbReference type="SAM" id="MobiDB-lite"/>
    </source>
</evidence>
<evidence type="ECO:0000305" key="3"/>
<dbReference type="EMBL" id="CP001277">
    <property type="protein sequence ID" value="ACQ68439.1"/>
    <property type="molecule type" value="Genomic_DNA"/>
</dbReference>
<dbReference type="RefSeq" id="WP_015874203.1">
    <property type="nucleotide sequence ID" value="NC_012751.1"/>
</dbReference>
<dbReference type="SMR" id="C4K796"/>
<dbReference type="STRING" id="572265.HDEF_1844"/>
<dbReference type="GeneID" id="66261430"/>
<dbReference type="KEGG" id="hde:HDEF_1844"/>
<dbReference type="eggNOG" id="COG0099">
    <property type="taxonomic scope" value="Bacteria"/>
</dbReference>
<dbReference type="HOGENOM" id="CLU_103849_1_2_6"/>
<dbReference type="Proteomes" id="UP000002334">
    <property type="component" value="Chromosome"/>
</dbReference>
<dbReference type="GO" id="GO:0005829">
    <property type="term" value="C:cytosol"/>
    <property type="evidence" value="ECO:0007669"/>
    <property type="project" value="TreeGrafter"/>
</dbReference>
<dbReference type="GO" id="GO:0015935">
    <property type="term" value="C:small ribosomal subunit"/>
    <property type="evidence" value="ECO:0007669"/>
    <property type="project" value="TreeGrafter"/>
</dbReference>
<dbReference type="GO" id="GO:0019843">
    <property type="term" value="F:rRNA binding"/>
    <property type="evidence" value="ECO:0007669"/>
    <property type="project" value="UniProtKB-UniRule"/>
</dbReference>
<dbReference type="GO" id="GO:0003735">
    <property type="term" value="F:structural constituent of ribosome"/>
    <property type="evidence" value="ECO:0007669"/>
    <property type="project" value="InterPro"/>
</dbReference>
<dbReference type="GO" id="GO:0000049">
    <property type="term" value="F:tRNA binding"/>
    <property type="evidence" value="ECO:0007669"/>
    <property type="project" value="UniProtKB-UniRule"/>
</dbReference>
<dbReference type="GO" id="GO:0006412">
    <property type="term" value="P:translation"/>
    <property type="evidence" value="ECO:0007669"/>
    <property type="project" value="UniProtKB-UniRule"/>
</dbReference>
<dbReference type="FunFam" id="1.10.8.50:FF:000001">
    <property type="entry name" value="30S ribosomal protein S13"/>
    <property type="match status" value="1"/>
</dbReference>
<dbReference type="FunFam" id="4.10.910.10:FF:000001">
    <property type="entry name" value="30S ribosomal protein S13"/>
    <property type="match status" value="1"/>
</dbReference>
<dbReference type="Gene3D" id="1.10.8.50">
    <property type="match status" value="1"/>
</dbReference>
<dbReference type="Gene3D" id="4.10.910.10">
    <property type="entry name" value="30s ribosomal protein s13, domain 2"/>
    <property type="match status" value="1"/>
</dbReference>
<dbReference type="HAMAP" id="MF_01315">
    <property type="entry name" value="Ribosomal_uS13"/>
    <property type="match status" value="1"/>
</dbReference>
<dbReference type="InterPro" id="IPR027437">
    <property type="entry name" value="Rbsml_uS13_C"/>
</dbReference>
<dbReference type="InterPro" id="IPR001892">
    <property type="entry name" value="Ribosomal_uS13"/>
</dbReference>
<dbReference type="InterPro" id="IPR010979">
    <property type="entry name" value="Ribosomal_uS13-like_H2TH"/>
</dbReference>
<dbReference type="InterPro" id="IPR019980">
    <property type="entry name" value="Ribosomal_uS13_bac-type"/>
</dbReference>
<dbReference type="InterPro" id="IPR018269">
    <property type="entry name" value="Ribosomal_uS13_CS"/>
</dbReference>
<dbReference type="NCBIfam" id="TIGR03631">
    <property type="entry name" value="uS13_bact"/>
    <property type="match status" value="1"/>
</dbReference>
<dbReference type="PANTHER" id="PTHR10871">
    <property type="entry name" value="30S RIBOSOMAL PROTEIN S13/40S RIBOSOMAL PROTEIN S18"/>
    <property type="match status" value="1"/>
</dbReference>
<dbReference type="PANTHER" id="PTHR10871:SF1">
    <property type="entry name" value="SMALL RIBOSOMAL SUBUNIT PROTEIN US13M"/>
    <property type="match status" value="1"/>
</dbReference>
<dbReference type="Pfam" id="PF00416">
    <property type="entry name" value="Ribosomal_S13"/>
    <property type="match status" value="1"/>
</dbReference>
<dbReference type="PIRSF" id="PIRSF002134">
    <property type="entry name" value="Ribosomal_S13"/>
    <property type="match status" value="1"/>
</dbReference>
<dbReference type="SUPFAM" id="SSF46946">
    <property type="entry name" value="S13-like H2TH domain"/>
    <property type="match status" value="1"/>
</dbReference>
<dbReference type="PROSITE" id="PS00646">
    <property type="entry name" value="RIBOSOMAL_S13_1"/>
    <property type="match status" value="1"/>
</dbReference>
<dbReference type="PROSITE" id="PS50159">
    <property type="entry name" value="RIBOSOMAL_S13_2"/>
    <property type="match status" value="1"/>
</dbReference>
<feature type="chain" id="PRO_1000214398" description="Small ribosomal subunit protein uS13">
    <location>
        <begin position="1"/>
        <end position="118"/>
    </location>
</feature>
<feature type="region of interest" description="Disordered" evidence="2">
    <location>
        <begin position="91"/>
        <end position="118"/>
    </location>
</feature>
<organism>
    <name type="scientific">Hamiltonella defensa subsp. Acyrthosiphon pisum (strain 5AT)</name>
    <dbReference type="NCBI Taxonomy" id="572265"/>
    <lineage>
        <taxon>Bacteria</taxon>
        <taxon>Pseudomonadati</taxon>
        <taxon>Pseudomonadota</taxon>
        <taxon>Gammaproteobacteria</taxon>
        <taxon>Enterobacterales</taxon>
        <taxon>Enterobacteriaceae</taxon>
        <taxon>aphid secondary symbionts</taxon>
        <taxon>Candidatus Hamiltonella</taxon>
    </lineage>
</organism>
<keyword id="KW-0687">Ribonucleoprotein</keyword>
<keyword id="KW-0689">Ribosomal protein</keyword>
<keyword id="KW-0694">RNA-binding</keyword>
<keyword id="KW-0699">rRNA-binding</keyword>
<keyword id="KW-0820">tRNA-binding</keyword>
<sequence length="118" mass="13219">MARIAGINIPDKKHAVIALTSIYGIGRTTALDICAKTGVSAAVKISELSEKQIEELREQVAKYTVEGDLRREVTLNIKRLMDIGTYRGLRHRRGLPVRGQRTKTNARTRKGPRKPIKK</sequence>
<comment type="function">
    <text evidence="1">Located at the top of the head of the 30S subunit, it contacts several helices of the 16S rRNA. In the 70S ribosome it contacts the 23S rRNA (bridge B1a) and protein L5 of the 50S subunit (bridge B1b), connecting the 2 subunits; these bridges are implicated in subunit movement. Contacts the tRNAs in the A and P-sites.</text>
</comment>
<comment type="subunit">
    <text evidence="1">Part of the 30S ribosomal subunit. Forms a loose heterodimer with protein S19. Forms two bridges to the 50S subunit in the 70S ribosome.</text>
</comment>
<comment type="similarity">
    <text evidence="1">Belongs to the universal ribosomal protein uS13 family.</text>
</comment>
<protein>
    <recommendedName>
        <fullName evidence="1">Small ribosomal subunit protein uS13</fullName>
    </recommendedName>
    <alternativeName>
        <fullName evidence="3">30S ribosomal protein S13</fullName>
    </alternativeName>
</protein>
<name>RS13_HAMD5</name>
<reference key="1">
    <citation type="journal article" date="2009" name="Proc. Natl. Acad. Sci. U.S.A.">
        <title>Hamiltonella defensa, genome evolution of protective bacterial endosymbiont from pathogenic ancestors.</title>
        <authorList>
            <person name="Degnan P.H."/>
            <person name="Yu Y."/>
            <person name="Sisneros N."/>
            <person name="Wing R.A."/>
            <person name="Moran N.A."/>
        </authorList>
    </citation>
    <scope>NUCLEOTIDE SEQUENCE [LARGE SCALE GENOMIC DNA]</scope>
    <source>
        <strain>5AT</strain>
    </source>
</reference>
<accession>C4K796</accession>